<keyword id="KW-0614">Plasmid</keyword>
<keyword id="KW-0964">Secreted</keyword>
<keyword id="KW-0843">Virulence</keyword>
<dbReference type="EMBL" id="M83986">
    <property type="protein sequence ID" value="AAA27649.1"/>
    <property type="molecule type" value="Genomic_DNA"/>
</dbReference>
<dbReference type="EMBL" id="BX936399">
    <property type="protein sequence ID" value="CAF25427.1"/>
    <property type="molecule type" value="Genomic_DNA"/>
</dbReference>
<dbReference type="RefSeq" id="WP_011191390.1">
    <property type="nucleotide sequence ID" value="NC_006153.2"/>
</dbReference>
<dbReference type="SMR" id="Q663I2"/>
<dbReference type="KEGG" id="ypo:BZ17_4251"/>
<dbReference type="KEGG" id="yps:pYV0084"/>
<dbReference type="PATRIC" id="fig|273123.14.peg.4486"/>
<dbReference type="Proteomes" id="UP000001011">
    <property type="component" value="Plasmid pYV"/>
</dbReference>
<dbReference type="GO" id="GO:0005576">
    <property type="term" value="C:extracellular region"/>
    <property type="evidence" value="ECO:0007669"/>
    <property type="project" value="UniProtKB-SubCell"/>
</dbReference>
<dbReference type="GO" id="GO:0030257">
    <property type="term" value="C:type III protein secretion system complex"/>
    <property type="evidence" value="ECO:0007669"/>
    <property type="project" value="InterPro"/>
</dbReference>
<dbReference type="GO" id="GO:0030254">
    <property type="term" value="P:protein secretion by the type III secretion system"/>
    <property type="evidence" value="ECO:0007669"/>
    <property type="project" value="InterPro"/>
</dbReference>
<dbReference type="Gene3D" id="1.10.10.1000">
    <property type="entry name" value="Type III secretion system virulence factor YopR, core domain"/>
    <property type="match status" value="1"/>
</dbReference>
<dbReference type="InterPro" id="IPR013349">
    <property type="entry name" value="T3SS_YopR"/>
</dbReference>
<dbReference type="InterPro" id="IPR041814">
    <property type="entry name" value="YopR_core"/>
</dbReference>
<dbReference type="NCBIfam" id="TIGR02509">
    <property type="entry name" value="type_III_yopR"/>
    <property type="match status" value="1"/>
</dbReference>
<dbReference type="Pfam" id="PF09025">
    <property type="entry name" value="T3SS_needle_reg"/>
    <property type="match status" value="1"/>
</dbReference>
<dbReference type="SUPFAM" id="SSF140591">
    <property type="entry name" value="Type III secretion system domain"/>
    <property type="match status" value="1"/>
</dbReference>
<feature type="chain" id="PRO_0000066485" description="Type 3 secretion system regulator YopR">
    <location>
        <begin position="1"/>
        <end position="165"/>
    </location>
</feature>
<feature type="sequence conflict" description="In Ref. 1; AAA27649." evidence="6" ref="1">
    <original>M</original>
    <variation>T</variation>
    <location>
        <position position="70"/>
    </location>
</feature>
<gene>
    <name evidence="4" type="primary">yscH</name>
    <name evidence="5" type="synonym">lcrP</name>
    <name type="ordered locus">pYV0084</name>
</gene>
<geneLocation type="plasmid">
    <name>pIB1</name>
</geneLocation>
<geneLocation type="plasmid">
    <name>pYV</name>
</geneLocation>
<reference key="1">
    <citation type="journal article" date="1992" name="J. Bacteriol.">
        <title>A novel protein, LcrQ, involved in the low-calcium response of Yersinia pseudotuberculosis shows extensive homology to YopH.</title>
        <authorList>
            <person name="Rimpilaeinen M."/>
            <person name="Forsberg A."/>
            <person name="Wolf-Watz H."/>
        </authorList>
    </citation>
    <scope>NUCLEOTIDE SEQUENCE [GENOMIC DNA]</scope>
    <scope>INDUCTION</scope>
    <scope>OPERON</scope>
    <source>
        <strain>YPIII / Serotype O:3</strain>
        <plasmid>pIB1</plasmid>
    </source>
</reference>
<reference key="2">
    <citation type="journal article" date="2004" name="Proc. Natl. Acad. Sci. U.S.A.">
        <title>Insights into the evolution of Yersinia pestis through whole-genome comparison with Yersinia pseudotuberculosis.</title>
        <authorList>
            <person name="Chain P.S.G."/>
            <person name="Carniel E."/>
            <person name="Larimer F.W."/>
            <person name="Lamerdin J."/>
            <person name="Stoutland P.O."/>
            <person name="Regala W.M."/>
            <person name="Georgescu A.M."/>
            <person name="Vergez L.M."/>
            <person name="Land M.L."/>
            <person name="Motin V.L."/>
            <person name="Brubaker R.R."/>
            <person name="Fowler J."/>
            <person name="Hinnebusch J."/>
            <person name="Marceau M."/>
            <person name="Medigue C."/>
            <person name="Simonet M."/>
            <person name="Chenal-Francisque V."/>
            <person name="Souza B."/>
            <person name="Dacheux D."/>
            <person name="Elliott J.M."/>
            <person name="Derbise A."/>
            <person name="Hauser L.J."/>
            <person name="Garcia E."/>
        </authorList>
    </citation>
    <scope>NUCLEOTIDE SEQUENCE [LARGE SCALE GENOMIC DNA]</scope>
    <source>
        <strain>IP32953</strain>
        <plasmid>pYV</plasmid>
    </source>
</reference>
<reference key="3">
    <citation type="journal article" date="1999" name="Mol. Microbiol.">
        <title>Type III machines of pathogenic yersiniae secrete virulence factors into the extracellular milieu.</title>
        <authorList>
            <person name="Lee V.T."/>
            <person name="Schneewind O."/>
        </authorList>
    </citation>
    <scope>SUBCELLULAR LOCATION</scope>
    <source>
        <strain>YPIII / Serotype O:3</strain>
        <plasmid>pIB1</plasmid>
    </source>
</reference>
<sequence>MTVTLNRGSITSLMSSSQAVSTLQPVASELKTQLENKLKSESAEKTREVLWQQYYASNPPDHAVLEVLAMPVREALLARFGQHQGSVVPAIDLPELRSVLQQFDSFGKRWEAILLQVLEGIKPNESQVGLPYLSELINKELMILLPSNSIVDSLLHNSHQIDMDT</sequence>
<accession>Q663I2</accession>
<accession>Q00929</accession>
<comment type="function">
    <text evidence="1">May be involved in the regulation of the assembly of the type III secretion system (T3SS), also called injectisome, which is used to inject bacterial effector proteins into eukaryotic host cells (By similarity). May control the secretion and/or polymerization of YscF/SctF, the principal component of the needle filament, thereby impacting the assembly of the T3SS (By similarity). Involved in pathogenesis (By similarity).</text>
</comment>
<comment type="subcellular location">
    <subcellularLocation>
        <location evidence="2">Secreted</location>
    </subcellularLocation>
    <text evidence="2">Secreted via the type III secretion system (T3SS) (PubMed:10209737). Mostly secreted into the extracellular milieu (PubMed:10209737).</text>
</comment>
<comment type="induction">
    <text evidence="3 7">At 37 degrees Celsius in the absence of calcium (Probable). Belongs to an operon involved in the translocation of Yop proteins across the bacterial membranes or in the specific control of this function (PubMed:1577700).</text>
</comment>
<comment type="similarity">
    <text evidence="6">Belongs to the YopR family.</text>
</comment>
<evidence type="ECO:0000250" key="1">
    <source>
        <dbReference type="UniProtKB" id="Q01249"/>
    </source>
</evidence>
<evidence type="ECO:0000269" key="2">
    <source>
    </source>
</evidence>
<evidence type="ECO:0000269" key="3">
    <source>
    </source>
</evidence>
<evidence type="ECO:0000303" key="4">
    <source>
    </source>
</evidence>
<evidence type="ECO:0000303" key="5">
    <source>
    </source>
</evidence>
<evidence type="ECO:0000305" key="6"/>
<evidence type="ECO:0000305" key="7">
    <source>
    </source>
</evidence>
<name>YOPR_YERPS</name>
<proteinExistence type="evidence at transcript level"/>
<protein>
    <recommendedName>
        <fullName evidence="6">Type 3 secretion system regulator YopR</fullName>
        <shortName evidence="6">T3SS regulator YopR</shortName>
    </recommendedName>
    <alternativeName>
        <fullName evidence="5">Low calcium response locus protein P</fullName>
    </alternativeName>
    <alternativeName>
        <fullName evidence="6">Yersinia outer protein R</fullName>
    </alternativeName>
    <alternativeName>
        <fullName evidence="6">Yersinia secretion protein H</fullName>
    </alternativeName>
</protein>
<organism>
    <name type="scientific">Yersinia pseudotuberculosis serotype I (strain IP32953)</name>
    <dbReference type="NCBI Taxonomy" id="273123"/>
    <lineage>
        <taxon>Bacteria</taxon>
        <taxon>Pseudomonadati</taxon>
        <taxon>Pseudomonadota</taxon>
        <taxon>Gammaproteobacteria</taxon>
        <taxon>Enterobacterales</taxon>
        <taxon>Yersiniaceae</taxon>
        <taxon>Yersinia</taxon>
    </lineage>
</organism>